<feature type="chain" id="PRO_0000221072" description="Phosphatidylcholine:ceramide cholinephosphotransferase 2">
    <location>
        <begin position="1"/>
        <end position="365"/>
    </location>
</feature>
<feature type="transmembrane region" description="Helical" evidence="2">
    <location>
        <begin position="80"/>
        <end position="100"/>
    </location>
</feature>
<feature type="transmembrane region" description="Helical" evidence="2">
    <location>
        <begin position="128"/>
        <end position="148"/>
    </location>
</feature>
<feature type="transmembrane region" description="Helical" evidence="2">
    <location>
        <begin position="159"/>
        <end position="179"/>
    </location>
</feature>
<feature type="transmembrane region" description="Helical" evidence="2">
    <location>
        <begin position="206"/>
        <end position="226"/>
    </location>
</feature>
<feature type="transmembrane region" description="Helical" evidence="2">
    <location>
        <begin position="248"/>
        <end position="268"/>
    </location>
</feature>
<feature type="transmembrane region" description="Helical" evidence="2">
    <location>
        <begin position="275"/>
        <end position="295"/>
    </location>
</feature>
<feature type="topological domain" description="Cytoplasmic" evidence="2">
    <location>
        <begin position="296"/>
        <end position="365"/>
    </location>
</feature>
<feature type="region of interest" description="Disordered" evidence="3">
    <location>
        <begin position="1"/>
        <end position="52"/>
    </location>
</feature>
<feature type="compositionally biased region" description="Basic and acidic residues" evidence="3">
    <location>
        <begin position="1"/>
        <end position="14"/>
    </location>
</feature>
<feature type="compositionally biased region" description="Polar residues" evidence="3">
    <location>
        <begin position="15"/>
        <end position="24"/>
    </location>
</feature>
<feature type="active site" evidence="8">
    <location>
        <position position="229"/>
    </location>
</feature>
<feature type="active site" evidence="8">
    <location>
        <position position="272"/>
    </location>
</feature>
<feature type="active site" evidence="8">
    <location>
        <position position="276"/>
    </location>
</feature>
<feature type="lipid moiety-binding region" description="S-palmitoyl cysteine" evidence="9">
    <location>
        <position position="331"/>
    </location>
</feature>
<feature type="lipid moiety-binding region" description="S-palmitoyl cysteine" evidence="9">
    <location>
        <position position="332"/>
    </location>
</feature>
<feature type="lipid moiety-binding region" description="S-palmitoyl cysteine" evidence="9">
    <location>
        <position position="343"/>
    </location>
</feature>
<feature type="lipid moiety-binding region" description="S-palmitoyl cysteine" evidence="9">
    <location>
        <position position="348"/>
    </location>
</feature>
<feature type="sequence variant" id="VAR_052025" description="In dbSNP:rs17038204.">
    <original>T</original>
    <variation>M</variation>
    <location>
        <position position="21"/>
    </location>
</feature>
<feature type="sequence variant" id="VAR_082674" description="In CDL; loss of enzymatic activity; does not localize to plasma membrane." evidence="12">
    <location>
        <begin position="50"/>
        <end position="365"/>
    </location>
</feature>
<feature type="sequence variant" id="VAR_082675" description="In CDLSMD; uncertain significance; no effect on enzymatic activity; does not localize to plasma membrane; accumulates in the endoplasmic reticulum." evidence="12">
    <original>I</original>
    <variation>S</variation>
    <location>
        <position position="62"/>
    </location>
</feature>
<feature type="sequence variant" id="VAR_082676" description="In CDLSMD; uncertain significance; no effect on enzymatic activity; does not localize to plasma membrane; accumulates in the endoplasmic reticulum." evidence="12">
    <original>M</original>
    <variation>R</variation>
    <location>
        <position position="64"/>
    </location>
</feature>
<feature type="mutagenesis site" description="Abolishes enzyme activity by about 70%. No change in subcellular location." evidence="8">
    <original>S</original>
    <variation>A</variation>
    <location>
        <position position="227"/>
    </location>
</feature>
<feature type="mutagenesis site" description="Completely abolishes enzyme activity. No change in subcellular location." evidence="8">
    <original>H</original>
    <variation>A</variation>
    <location>
        <position position="229"/>
    </location>
</feature>
<feature type="mutagenesis site" description="Completely abolishes enzyme activity. No change in subcellular location." evidence="8">
    <original>H</original>
    <variation>A</variation>
    <location>
        <position position="272"/>
    </location>
</feature>
<feature type="mutagenesis site" description="Completely abolishes enzyme activity. No change in subcellular location." evidence="8 12">
    <original>D</original>
    <variation>E</variation>
    <variation>A</variation>
    <location>
        <position position="276"/>
    </location>
</feature>
<feature type="mutagenesis site" description="Little effect on palmitoylation; when associated with A-343 or A-348. Abolishes palmitoylation and dramatically reduces plasma membrane localization; when associated with A-343 and A-348." evidence="9">
    <original>CC</original>
    <variation>AA</variation>
    <location>
        <begin position="331"/>
        <end position="332"/>
    </location>
</feature>
<feature type="mutagenesis site" description="Strongly decreases palmitoylation; when associated with A-348. Abolishes palmitoylation and dramatically reduces plasma membrane localization; when associated with 331-A-A-332 and A-348." evidence="9">
    <original>C</original>
    <variation>A</variation>
    <location>
        <position position="343"/>
    </location>
</feature>
<feature type="mutagenesis site" description="Strongly decreases palmitoylation; when associated with A-343. Abolishes palmitoylation and dramatically reduces plasma membrane localization; when associated with 331-A-A-332 and A-343." evidence="9">
    <original>C</original>
    <variation>A</variation>
    <location>
        <position position="348"/>
    </location>
</feature>
<feature type="sequence conflict" description="In Ref. 2; BAF83033." evidence="16" ref="2">
    <original>W</original>
    <variation>R</variation>
    <location>
        <position position="313"/>
    </location>
</feature>
<reference evidence="21" key="1">
    <citation type="submission" date="2001-11" db="EMBL/GenBank/DDBJ databases">
        <authorList>
            <person name="Kim N.-S."/>
            <person name="Shon H.-Y."/>
            <person name="Oh J.-H."/>
            <person name="Lee J.-Y."/>
            <person name="Kim J.-M."/>
            <person name="Hahn Y."/>
            <person name="Park H.-S."/>
            <person name="Kim S."/>
            <person name="Kim Y.S."/>
        </authorList>
    </citation>
    <scope>NUCLEOTIDE SEQUENCE [MRNA]</scope>
</reference>
<reference key="2">
    <citation type="journal article" date="2004" name="Nat. Genet.">
        <title>Complete sequencing and characterization of 21,243 full-length human cDNAs.</title>
        <authorList>
            <person name="Ota T."/>
            <person name="Suzuki Y."/>
            <person name="Nishikawa T."/>
            <person name="Otsuki T."/>
            <person name="Sugiyama T."/>
            <person name="Irie R."/>
            <person name="Wakamatsu A."/>
            <person name="Hayashi K."/>
            <person name="Sato H."/>
            <person name="Nagai K."/>
            <person name="Kimura K."/>
            <person name="Makita H."/>
            <person name="Sekine M."/>
            <person name="Obayashi M."/>
            <person name="Nishi T."/>
            <person name="Shibahara T."/>
            <person name="Tanaka T."/>
            <person name="Ishii S."/>
            <person name="Yamamoto J."/>
            <person name="Saito K."/>
            <person name="Kawai Y."/>
            <person name="Isono Y."/>
            <person name="Nakamura Y."/>
            <person name="Nagahari K."/>
            <person name="Murakami K."/>
            <person name="Yasuda T."/>
            <person name="Iwayanagi T."/>
            <person name="Wagatsuma M."/>
            <person name="Shiratori A."/>
            <person name="Sudo H."/>
            <person name="Hosoiri T."/>
            <person name="Kaku Y."/>
            <person name="Kodaira H."/>
            <person name="Kondo H."/>
            <person name="Sugawara M."/>
            <person name="Takahashi M."/>
            <person name="Kanda K."/>
            <person name="Yokoi T."/>
            <person name="Furuya T."/>
            <person name="Kikkawa E."/>
            <person name="Omura Y."/>
            <person name="Abe K."/>
            <person name="Kamihara K."/>
            <person name="Katsuta N."/>
            <person name="Sato K."/>
            <person name="Tanikawa M."/>
            <person name="Yamazaki M."/>
            <person name="Ninomiya K."/>
            <person name="Ishibashi T."/>
            <person name="Yamashita H."/>
            <person name="Murakawa K."/>
            <person name="Fujimori K."/>
            <person name="Tanai H."/>
            <person name="Kimata M."/>
            <person name="Watanabe M."/>
            <person name="Hiraoka S."/>
            <person name="Chiba Y."/>
            <person name="Ishida S."/>
            <person name="Ono Y."/>
            <person name="Takiguchi S."/>
            <person name="Watanabe S."/>
            <person name="Yosida M."/>
            <person name="Hotuta T."/>
            <person name="Kusano J."/>
            <person name="Kanehori K."/>
            <person name="Takahashi-Fujii A."/>
            <person name="Hara H."/>
            <person name="Tanase T.-O."/>
            <person name="Nomura Y."/>
            <person name="Togiya S."/>
            <person name="Komai F."/>
            <person name="Hara R."/>
            <person name="Takeuchi K."/>
            <person name="Arita M."/>
            <person name="Imose N."/>
            <person name="Musashino K."/>
            <person name="Yuuki H."/>
            <person name="Oshima A."/>
            <person name="Sasaki N."/>
            <person name="Aotsuka S."/>
            <person name="Yoshikawa Y."/>
            <person name="Matsunawa H."/>
            <person name="Ichihara T."/>
            <person name="Shiohata N."/>
            <person name="Sano S."/>
            <person name="Moriya S."/>
            <person name="Momiyama H."/>
            <person name="Satoh N."/>
            <person name="Takami S."/>
            <person name="Terashima Y."/>
            <person name="Suzuki O."/>
            <person name="Nakagawa S."/>
            <person name="Senoh A."/>
            <person name="Mizoguchi H."/>
            <person name="Goto Y."/>
            <person name="Shimizu F."/>
            <person name="Wakebe H."/>
            <person name="Hishigaki H."/>
            <person name="Watanabe T."/>
            <person name="Sugiyama A."/>
            <person name="Takemoto M."/>
            <person name="Kawakami B."/>
            <person name="Yamazaki M."/>
            <person name="Watanabe K."/>
            <person name="Kumagai A."/>
            <person name="Itakura S."/>
            <person name="Fukuzumi Y."/>
            <person name="Fujimori Y."/>
            <person name="Komiyama M."/>
            <person name="Tashiro H."/>
            <person name="Tanigami A."/>
            <person name="Fujiwara T."/>
            <person name="Ono T."/>
            <person name="Yamada K."/>
            <person name="Fujii Y."/>
            <person name="Ozaki K."/>
            <person name="Hirao M."/>
            <person name="Ohmori Y."/>
            <person name="Kawabata A."/>
            <person name="Hikiji T."/>
            <person name="Kobatake N."/>
            <person name="Inagaki H."/>
            <person name="Ikema Y."/>
            <person name="Okamoto S."/>
            <person name="Okitani R."/>
            <person name="Kawakami T."/>
            <person name="Noguchi S."/>
            <person name="Itoh T."/>
            <person name="Shigeta K."/>
            <person name="Senba T."/>
            <person name="Matsumura K."/>
            <person name="Nakajima Y."/>
            <person name="Mizuno T."/>
            <person name="Morinaga M."/>
            <person name="Sasaki M."/>
            <person name="Togashi T."/>
            <person name="Oyama M."/>
            <person name="Hata H."/>
            <person name="Watanabe M."/>
            <person name="Komatsu T."/>
            <person name="Mizushima-Sugano J."/>
            <person name="Satoh T."/>
            <person name="Shirai Y."/>
            <person name="Takahashi Y."/>
            <person name="Nakagawa K."/>
            <person name="Okumura K."/>
            <person name="Nagase T."/>
            <person name="Nomura N."/>
            <person name="Kikuchi H."/>
            <person name="Masuho Y."/>
            <person name="Yamashita R."/>
            <person name="Nakai K."/>
            <person name="Yada T."/>
            <person name="Nakamura Y."/>
            <person name="Ohara O."/>
            <person name="Isogai T."/>
            <person name="Sugano S."/>
        </authorList>
    </citation>
    <scope>NUCLEOTIDE SEQUENCE [LARGE SCALE MRNA]</scope>
    <source>
        <tissue>Testis</tissue>
        <tissue>Tongue</tissue>
    </source>
</reference>
<reference key="3">
    <citation type="journal article" date="2005" name="Nature">
        <title>Generation and annotation of the DNA sequences of human chromosomes 2 and 4.</title>
        <authorList>
            <person name="Hillier L.W."/>
            <person name="Graves T.A."/>
            <person name="Fulton R.S."/>
            <person name="Fulton L.A."/>
            <person name="Pepin K.H."/>
            <person name="Minx P."/>
            <person name="Wagner-McPherson C."/>
            <person name="Layman D."/>
            <person name="Wylie K."/>
            <person name="Sekhon M."/>
            <person name="Becker M.C."/>
            <person name="Fewell G.A."/>
            <person name="Delehaunty K.D."/>
            <person name="Miner T.L."/>
            <person name="Nash W.E."/>
            <person name="Kremitzki C."/>
            <person name="Oddy L."/>
            <person name="Du H."/>
            <person name="Sun H."/>
            <person name="Bradshaw-Cordum H."/>
            <person name="Ali J."/>
            <person name="Carter J."/>
            <person name="Cordes M."/>
            <person name="Harris A."/>
            <person name="Isak A."/>
            <person name="van Brunt A."/>
            <person name="Nguyen C."/>
            <person name="Du F."/>
            <person name="Courtney L."/>
            <person name="Kalicki J."/>
            <person name="Ozersky P."/>
            <person name="Abbott S."/>
            <person name="Armstrong J."/>
            <person name="Belter E.A."/>
            <person name="Caruso L."/>
            <person name="Cedroni M."/>
            <person name="Cotton M."/>
            <person name="Davidson T."/>
            <person name="Desai A."/>
            <person name="Elliott G."/>
            <person name="Erb T."/>
            <person name="Fronick C."/>
            <person name="Gaige T."/>
            <person name="Haakenson W."/>
            <person name="Haglund K."/>
            <person name="Holmes A."/>
            <person name="Harkins R."/>
            <person name="Kim K."/>
            <person name="Kruchowski S.S."/>
            <person name="Strong C.M."/>
            <person name="Grewal N."/>
            <person name="Goyea E."/>
            <person name="Hou S."/>
            <person name="Levy A."/>
            <person name="Martinka S."/>
            <person name="Mead K."/>
            <person name="McLellan M.D."/>
            <person name="Meyer R."/>
            <person name="Randall-Maher J."/>
            <person name="Tomlinson C."/>
            <person name="Dauphin-Kohlberg S."/>
            <person name="Kozlowicz-Reilly A."/>
            <person name="Shah N."/>
            <person name="Swearengen-Shahid S."/>
            <person name="Snider J."/>
            <person name="Strong J.T."/>
            <person name="Thompson J."/>
            <person name="Yoakum M."/>
            <person name="Leonard S."/>
            <person name="Pearman C."/>
            <person name="Trani L."/>
            <person name="Radionenko M."/>
            <person name="Waligorski J.E."/>
            <person name="Wang C."/>
            <person name="Rock S.M."/>
            <person name="Tin-Wollam A.-M."/>
            <person name="Maupin R."/>
            <person name="Latreille P."/>
            <person name="Wendl M.C."/>
            <person name="Yang S.-P."/>
            <person name="Pohl C."/>
            <person name="Wallis J.W."/>
            <person name="Spieth J."/>
            <person name="Bieri T.A."/>
            <person name="Berkowicz N."/>
            <person name="Nelson J.O."/>
            <person name="Osborne J."/>
            <person name="Ding L."/>
            <person name="Meyer R."/>
            <person name="Sabo A."/>
            <person name="Shotland Y."/>
            <person name="Sinha P."/>
            <person name="Wohldmann P.E."/>
            <person name="Cook L.L."/>
            <person name="Hickenbotham M.T."/>
            <person name="Eldred J."/>
            <person name="Williams D."/>
            <person name="Jones T.A."/>
            <person name="She X."/>
            <person name="Ciccarelli F.D."/>
            <person name="Izaurralde E."/>
            <person name="Taylor J."/>
            <person name="Schmutz J."/>
            <person name="Myers R.M."/>
            <person name="Cox D.R."/>
            <person name="Huang X."/>
            <person name="McPherson J.D."/>
            <person name="Mardis E.R."/>
            <person name="Clifton S.W."/>
            <person name="Warren W.C."/>
            <person name="Chinwalla A.T."/>
            <person name="Eddy S.R."/>
            <person name="Marra M.A."/>
            <person name="Ovcharenko I."/>
            <person name="Furey T.S."/>
            <person name="Miller W."/>
            <person name="Eichler E.E."/>
            <person name="Bork P."/>
            <person name="Suyama M."/>
            <person name="Torrents D."/>
            <person name="Waterston R.H."/>
            <person name="Wilson R.K."/>
        </authorList>
    </citation>
    <scope>NUCLEOTIDE SEQUENCE [LARGE SCALE GENOMIC DNA]</scope>
</reference>
<reference evidence="21" key="4">
    <citation type="submission" date="2005-07" db="EMBL/GenBank/DDBJ databases">
        <authorList>
            <person name="Mural R.J."/>
            <person name="Istrail S."/>
            <person name="Sutton G.G."/>
            <person name="Florea L."/>
            <person name="Halpern A.L."/>
            <person name="Mobarry C.M."/>
            <person name="Lippert R."/>
            <person name="Walenz B."/>
            <person name="Shatkay H."/>
            <person name="Dew I."/>
            <person name="Miller J.R."/>
            <person name="Flanigan M.J."/>
            <person name="Edwards N.J."/>
            <person name="Bolanos R."/>
            <person name="Fasulo D."/>
            <person name="Halldorsson B.V."/>
            <person name="Hannenhalli S."/>
            <person name="Turner R."/>
            <person name="Yooseph S."/>
            <person name="Lu F."/>
            <person name="Nusskern D.R."/>
            <person name="Shue B.C."/>
            <person name="Zheng X.H."/>
            <person name="Zhong F."/>
            <person name="Delcher A.L."/>
            <person name="Huson D.H."/>
            <person name="Kravitz S.A."/>
            <person name="Mouchard L."/>
            <person name="Reinert K."/>
            <person name="Remington K.A."/>
            <person name="Clark A.G."/>
            <person name="Waterman M.S."/>
            <person name="Eichler E.E."/>
            <person name="Adams M.D."/>
            <person name="Hunkapiller M.W."/>
            <person name="Myers E.W."/>
            <person name="Venter J.C."/>
        </authorList>
    </citation>
    <scope>NUCLEOTIDE SEQUENCE [LARGE SCALE GENOMIC DNA]</scope>
</reference>
<reference key="5">
    <citation type="journal article" date="2004" name="Genome Res.">
        <title>The status, quality, and expansion of the NIH full-length cDNA project: the Mammalian Gene Collection (MGC).</title>
        <authorList>
            <consortium name="The MGC Project Team"/>
        </authorList>
    </citation>
    <scope>NUCLEOTIDE SEQUENCE [LARGE SCALE MRNA]</scope>
    <source>
        <tissue evidence="20">Testis</tissue>
    </source>
</reference>
<reference key="6">
    <citation type="journal article" date="2004" name="EMBO J.">
        <title>Identification of a family of animal sphingomyelin synthases.</title>
        <authorList>
            <person name="Huitema K."/>
            <person name="Van Den Dikkenberg J."/>
            <person name="Brouwers J.F.H.M."/>
            <person name="Holthuis J.C."/>
        </authorList>
    </citation>
    <scope>FUNCTION</scope>
    <scope>CATALYTIC ACTIVITY</scope>
    <scope>SUBCELLULAR LOCATION</scope>
    <scope>TISSUE SPECIFICITY</scope>
    <scope>ACTIVITY REGULATION</scope>
    <scope>TOPOLOGY OF C-TERMINUS</scope>
</reference>
<reference key="7">
    <citation type="journal article" date="2006" name="J. Lipid Res.">
        <title>Adenovirus-mediated overexpression of sphingomyelin synthases 1 and 2 increases the atherogenic potential in mice.</title>
        <authorList>
            <person name="Dong J."/>
            <person name="Liu J."/>
            <person name="Lou B."/>
            <person name="Li Z."/>
            <person name="Ye X."/>
            <person name="Wu M."/>
            <person name="Jiang X.-C."/>
        </authorList>
    </citation>
    <scope>OVEREXPRESSION IN MOUSE</scope>
</reference>
<reference key="8">
    <citation type="journal article" date="2007" name="J. Biol. Chem.">
        <title>Both sphingomyelin synthases SMS1 and SMS2 are required for sphingomyelin homeostasis and growth in human HeLa cells.</title>
        <authorList>
            <person name="Tafesse F.G."/>
            <person name="Huitema K."/>
            <person name="Hermansson M."/>
            <person name="van der Poel S."/>
            <person name="van den Dikkenberg J."/>
            <person name="Uphoff A."/>
            <person name="Somerharju P."/>
            <person name="Holthuis J.C.M."/>
        </authorList>
    </citation>
    <scope>FUNCTION</scope>
    <scope>CATALYTIC ACTIVITY</scope>
</reference>
<reference key="9">
    <citation type="journal article" date="2008" name="Biochim. Biophys. Acta">
        <title>The domain responsible for sphingomyelin synthase (SMS) activity.</title>
        <authorList>
            <person name="Yeang C."/>
            <person name="Varshney S."/>
            <person name="Wang R."/>
            <person name="Zhang Y."/>
            <person name="Ye D."/>
            <person name="Jiang X.C."/>
        </authorList>
    </citation>
    <scope>ACTIVE SITES</scope>
    <scope>SUBCELLULAR LOCATION</scope>
    <scope>MUTAGENESIS OF SER-227; HIS-229; HIS-272 AND ASP-276</scope>
</reference>
<reference key="10">
    <citation type="journal article" date="2008" name="Biochem. J.">
        <title>Sphingomyelin synthases regulate production of diacylglycerol at the Golgi.</title>
        <authorList>
            <person name="Villani M."/>
            <person name="Subathra M."/>
            <person name="Im Y.B."/>
            <person name="Choi Y."/>
            <person name="Signorelli P."/>
            <person name="Del Poeta M."/>
            <person name="Luberto C."/>
        </authorList>
    </citation>
    <scope>FUNCTION</scope>
    <scope>CATALYTIC ACTIVITY</scope>
    <scope>SUBCELLULAR LOCATION</scope>
</reference>
<reference key="11">
    <citation type="journal article" date="2008" name="J. Lipid Res.">
        <title>SMS overexpression and knockdown: impact on cellular sphingomyelin and diacylglycerol metabolism, and cell apoptosis.</title>
        <authorList>
            <person name="Ding T."/>
            <person name="Li Z."/>
            <person name="Hailemariam T."/>
            <person name="Mukherjee S."/>
            <person name="Maxfield F.R."/>
            <person name="Wu M.P."/>
            <person name="Jiang X.C."/>
        </authorList>
    </citation>
    <scope>FUNCTION</scope>
    <scope>CATALYTIC ACTIVITY</scope>
    <scope>PATHWAY</scope>
</reference>
<reference key="12">
    <citation type="journal article" date="2009" name="Biochem. Biophys. Res. Commun.">
        <title>Sphingomyelin synthase 2 is palmitoylated at the COOH-terminal tail, which is involved in its localization in plasma membranes.</title>
        <authorList>
            <person name="Tani M."/>
            <person name="Kuge O."/>
        </authorList>
    </citation>
    <scope>SUBCELLULAR LOCATION</scope>
    <scope>PALMITOYLATION AT CYS-331; CYS-332; CYS-343 AND CYS-348</scope>
    <scope>MUTAGENESIS OF 331-CYS-CYS-332; CYS-343 AND CYS-348</scope>
</reference>
<reference key="13">
    <citation type="journal article" date="2009" name="J. Lipid Res.">
        <title>Sphingomyelin synthase SMS2 displays dual activity as ceramide phosphoethanolamine synthase.</title>
        <authorList>
            <person name="Ternes P."/>
            <person name="Brouwers J.F."/>
            <person name="van den Dikkenberg J."/>
            <person name="Holthuis J.C."/>
        </authorList>
    </citation>
    <scope>FUNCTION</scope>
    <scope>CATALYTIC ACTIVITY</scope>
</reference>
<reference key="14">
    <citation type="journal article" date="2011" name="PLoS ONE">
        <title>Sphingomyelin synthases regulate protein trafficking and secretion.</title>
        <authorList>
            <person name="Subathra M."/>
            <person name="Qureshi A."/>
            <person name="Luberto C."/>
        </authorList>
    </citation>
    <scope>FUNCTION</scope>
</reference>
<reference key="15">
    <citation type="journal article" date="2019" name="JCI Insight">
        <title>Osteoporosis and skeletal dysplasia caused by pathogenic variants in SGMS2.</title>
        <authorList>
            <person name="Pekkinen M."/>
            <person name="Terhal P.A."/>
            <person name="Botto L.D."/>
            <person name="Henning P."/>
            <person name="Maekitie R.E."/>
            <person name="Roschger P."/>
            <person name="Jain A."/>
            <person name="Kol M."/>
            <person name="Kjellberg M.A."/>
            <person name="Paschalis E.P."/>
            <person name="van Gassen K."/>
            <person name="Murray M."/>
            <person name="Bayrak-Toydemir P."/>
            <person name="Magnusson M.K."/>
            <person name="Jans J."/>
            <person name="Kausar M."/>
            <person name="Carey J.C."/>
            <person name="Somerharju P."/>
            <person name="Lerner U.H."/>
            <person name="Olkkonen V.M."/>
            <person name="Klaushofer K."/>
            <person name="Holthuis J.C."/>
            <person name="Maekitie O."/>
        </authorList>
    </citation>
    <scope>FUNCTION</scope>
    <scope>SUBCELLULAR LOCATION</scope>
    <scope>INVOLVEMENT IN CDL</scope>
    <scope>INVOLVEMENT IN CDLSMD</scope>
    <scope>VARIANT CDL 50-ARG--THR-365 DEL</scope>
    <scope>VARIANTS CDLSMD SER-62 AND ARG-64</scope>
    <scope>CHARACTERIZATION OF VARIANT CDL 50-ARG--THR-365 DEL</scope>
    <scope>CHARACTERIZATION OF VARIANTS CDLSMD SER-62 AND ARG-64</scope>
    <scope>MUTAGENESIS OF ASP-276</scope>
</reference>
<reference key="16">
    <citation type="journal article" date="2024" name="Nat. Struct. Mol. Biol.">
        <title>Cryo-EM structure of human sphingomyelin synthase and its mechanistic implications for sphingomyelin synthesis.</title>
        <authorList>
            <person name="Hu K."/>
            <person name="Zhang Q."/>
            <person name="Chen Y."/>
            <person name="Yang J."/>
            <person name="Xia Y."/>
            <person name="Rao B."/>
            <person name="Li S."/>
            <person name="Shen Y."/>
            <person name="Cao M."/>
            <person name="Lu H."/>
            <person name="Qin A."/>
            <person name="Jiang X.C."/>
            <person name="Yao D."/>
            <person name="Zhao J."/>
            <person name="Zhou L."/>
            <person name="Cao Y."/>
        </authorList>
    </citation>
    <scope>FUNCTION</scope>
    <scope>CATALYTIC ACTIVITY</scope>
</reference>
<comment type="function">
    <text evidence="4 5 6 7 10 11 12 13">Sphingomyelin synthase that primarily contributes to sphingomyelin synthesis and homeostasis at the plasma membrane. Catalyzes the reversible transfer of phosphocholine moiety in sphingomyelin biosynthesis: in the forward reaction transfers phosphocholine head group of phosphatidylcholine (PC) on to ceramide (CER) to form ceramide phosphocholine (sphingomyelin, SM) and diacylglycerol (DAG) as by-product, and in the reverse reaction transfers phosphocholine from SM to DAG to form PC and CER (PubMed:14685263, PubMed:17449912, PubMed:17982138, PubMed:18370930, PubMed:38388831). The direction of the reaction appears to depend on the levels of CER and DAG in the plasma membrane (PubMed:14685263, PubMed:17449912, PubMed:17982138, PubMed:18370930). Does not use free phosphorylcholine or CDP-choline as donors (PubMed:14685263). Can also transfer phosphoethanolamine head group of phosphatidylethanolamine (PE) on to ceramide (CER) to form ceramide phosphoethanolamine (CPE) (PubMed:19454763). Regulates receptor-mediated signal transduction via mitogenic DAG and proapoptotic CER, as well as via SM, a structural component of membrane rafts that serve as platforms for signal transduction and protein sorting (PubMed:17449912, PubMed:17982138). To a lesser extent, plays a role in secretory transport via regulation of DAG pool at the Golgi apparatus and its downstream effects on PRKD1 (PubMed:18370930, PubMed:21980337). Required for normal bone matrix mineralization (PubMed:30779713).</text>
</comment>
<comment type="catalytic activity">
    <reaction evidence="4 5 6 7 13">
        <text>an N-acylsphing-4-enine + a 1,2-diacyl-sn-glycero-3-phosphocholine = a sphingomyelin + a 1,2-diacyl-sn-glycerol</text>
        <dbReference type="Rhea" id="RHEA:18765"/>
        <dbReference type="ChEBI" id="CHEBI:17636"/>
        <dbReference type="ChEBI" id="CHEBI:17815"/>
        <dbReference type="ChEBI" id="CHEBI:52639"/>
        <dbReference type="ChEBI" id="CHEBI:57643"/>
        <dbReference type="EC" id="2.7.8.27"/>
    </reaction>
    <physiologicalReaction direction="left-to-right" evidence="17 19">
        <dbReference type="Rhea" id="RHEA:18766"/>
    </physiologicalReaction>
    <physiologicalReaction direction="right-to-left" evidence="17">
        <dbReference type="Rhea" id="RHEA:18767"/>
    </physiologicalReaction>
</comment>
<comment type="catalytic activity">
    <reaction evidence="10">
        <text>an N-acylsphinganine + a 1,2-diacyl-sn-glycero-3-phosphocholine = an N-acylsphinganine-1-phosphocholine + a 1,2-diacyl-sn-glycerol</text>
        <dbReference type="Rhea" id="RHEA:44620"/>
        <dbReference type="ChEBI" id="CHEBI:17815"/>
        <dbReference type="ChEBI" id="CHEBI:31488"/>
        <dbReference type="ChEBI" id="CHEBI:57643"/>
        <dbReference type="ChEBI" id="CHEBI:67090"/>
    </reaction>
    <physiologicalReaction direction="left-to-right" evidence="17 18">
        <dbReference type="Rhea" id="RHEA:44621"/>
    </physiologicalReaction>
    <physiologicalReaction direction="right-to-left" evidence="17">
        <dbReference type="Rhea" id="RHEA:44622"/>
    </physiologicalReaction>
</comment>
<comment type="catalytic activity">
    <reaction evidence="10">
        <text>an N-acyl-(4R)-4-hydroxysphinganine + a 1,2-diacyl-sn-glycero-3-phosphocholine = an N-acyl-(4R)-4-hydroxysphinganine-phosphocholine + a 1,2-diacyl-sn-glycerol</text>
        <dbReference type="Rhea" id="RHEA:42152"/>
        <dbReference type="ChEBI" id="CHEBI:17815"/>
        <dbReference type="ChEBI" id="CHEBI:31998"/>
        <dbReference type="ChEBI" id="CHEBI:57643"/>
        <dbReference type="ChEBI" id="CHEBI:78651"/>
    </reaction>
    <physiologicalReaction direction="left-to-right" evidence="17 18">
        <dbReference type="Rhea" id="RHEA:42153"/>
    </physiologicalReaction>
    <physiologicalReaction direction="right-to-left" evidence="17">
        <dbReference type="Rhea" id="RHEA:42154"/>
    </physiologicalReaction>
</comment>
<comment type="catalytic activity">
    <reaction evidence="10">
        <text>an N-acylsphinganine + a 1,2-diacyl-sn-glycero-3-phosphoethanolamine = an N-acylsphinganine-1-phosphoethanolamine + a 1,2-diacyl-sn-glycerol</text>
        <dbReference type="Rhea" id="RHEA:42136"/>
        <dbReference type="ChEBI" id="CHEBI:17815"/>
        <dbReference type="ChEBI" id="CHEBI:31488"/>
        <dbReference type="ChEBI" id="CHEBI:64612"/>
        <dbReference type="ChEBI" id="CHEBI:78655"/>
    </reaction>
    <physiologicalReaction direction="left-to-right" evidence="17 18">
        <dbReference type="Rhea" id="RHEA:42137"/>
    </physiologicalReaction>
</comment>
<comment type="catalytic activity">
    <reaction evidence="10">
        <text>an N-acyl-(4R)-4-hydroxysphinganine + a 1,2-diacyl-sn-glycero-3-phosphoethanolamine = an N-acyl-(4R)-4-hydroxysphinganine-1-phosphoethanolamine + a 1,2-diacyl-sn-glycerol</text>
        <dbReference type="Rhea" id="RHEA:42148"/>
        <dbReference type="ChEBI" id="CHEBI:17815"/>
        <dbReference type="ChEBI" id="CHEBI:31998"/>
        <dbReference type="ChEBI" id="CHEBI:64612"/>
        <dbReference type="ChEBI" id="CHEBI:78657"/>
    </reaction>
    <physiologicalReaction direction="left-to-right" evidence="17 18">
        <dbReference type="Rhea" id="RHEA:42149"/>
    </physiologicalReaction>
</comment>
<comment type="catalytic activity">
    <reaction evidence="1">
        <text>an N-acylsphing-4-enine + a 1,2-diacyl-sn-glycero-3-phosphoethanolamine = an N-acylsphing-4-enine 1-phosphoethanolamine + a 1,2-diacyl-sn-glycerol</text>
        <dbReference type="Rhea" id="RHEA:36079"/>
        <dbReference type="ChEBI" id="CHEBI:17815"/>
        <dbReference type="ChEBI" id="CHEBI:52639"/>
        <dbReference type="ChEBI" id="CHEBI:64612"/>
        <dbReference type="ChEBI" id="CHEBI:73203"/>
    </reaction>
    <physiologicalReaction direction="left-to-right" evidence="1">
        <dbReference type="Rhea" id="RHEA:36080"/>
    </physiologicalReaction>
</comment>
<comment type="catalytic activity">
    <reaction evidence="4">
        <text>1,2-dihexadecanoyl-sn-glycero-3-phosphocholine + an N-acylsphing-4-enine = 1,2-dihexadecanoyl-sn-glycerol + a sphingomyelin</text>
        <dbReference type="Rhea" id="RHEA:43324"/>
        <dbReference type="ChEBI" id="CHEBI:17636"/>
        <dbReference type="ChEBI" id="CHEBI:52639"/>
        <dbReference type="ChEBI" id="CHEBI:72999"/>
        <dbReference type="ChEBI" id="CHEBI:82929"/>
    </reaction>
    <physiologicalReaction direction="left-to-right" evidence="17">
        <dbReference type="Rhea" id="RHEA:43325"/>
    </physiologicalReaction>
    <physiologicalReaction direction="right-to-left" evidence="17">
        <dbReference type="Rhea" id="RHEA:43326"/>
    </physiologicalReaction>
</comment>
<comment type="catalytic activity">
    <reaction evidence="4">
        <text>1-(9Z-octadecenoyl)-2-acyl-sn-3-glycerol + a sphingomyelin = a 1-(9Z-octadecenoyl)-2-acyl-sn-glycero-3-phosphocholine + an N-acylsphing-4-enine</text>
        <dbReference type="Rhea" id="RHEA:43320"/>
        <dbReference type="ChEBI" id="CHEBI:17636"/>
        <dbReference type="ChEBI" id="CHEBI:52639"/>
        <dbReference type="ChEBI" id="CHEBI:78421"/>
        <dbReference type="ChEBI" id="CHEBI:82983"/>
    </reaction>
    <physiologicalReaction direction="left-to-right" evidence="17">
        <dbReference type="Rhea" id="RHEA:43321"/>
    </physiologicalReaction>
    <physiologicalReaction direction="right-to-left" evidence="17">
        <dbReference type="Rhea" id="RHEA:43322"/>
    </physiologicalReaction>
</comment>
<comment type="catalytic activity">
    <reaction evidence="10">
        <text>N-hexadecanoylsphinganine + a 1,2-diacyl-sn-glycero-3-phosphocholine = N-hexadecanoyl-sphinganine-1-phosphocholine + a 1,2-diacyl-sn-glycerol</text>
        <dbReference type="Rhea" id="RHEA:41796"/>
        <dbReference type="ChEBI" id="CHEBI:17815"/>
        <dbReference type="ChEBI" id="CHEBI:57643"/>
        <dbReference type="ChEBI" id="CHEBI:67042"/>
        <dbReference type="ChEBI" id="CHEBI:78647"/>
    </reaction>
    <physiologicalReaction direction="left-to-right" evidence="17 18">
        <dbReference type="Rhea" id="RHEA:41797"/>
    </physiologicalReaction>
    <physiologicalReaction direction="right-to-left" evidence="17">
        <dbReference type="Rhea" id="RHEA:41798"/>
    </physiologicalReaction>
</comment>
<comment type="catalytic activity">
    <reaction evidence="10">
        <text>N-hexadecanoyl-(4R)-hydroxysphinganine + a 1,2-diacyl-sn-glycero-3-phosphocholine = N-hexadecanoyl-(4R)-hydroxysphinganine-phosphocholine + a 1,2-diacyl-sn-glycerol</text>
        <dbReference type="Rhea" id="RHEA:42140"/>
        <dbReference type="ChEBI" id="CHEBI:17815"/>
        <dbReference type="ChEBI" id="CHEBI:57643"/>
        <dbReference type="ChEBI" id="CHEBI:65107"/>
        <dbReference type="ChEBI" id="CHEBI:78650"/>
    </reaction>
    <physiologicalReaction direction="left-to-right" evidence="17 18">
        <dbReference type="Rhea" id="RHEA:42141"/>
    </physiologicalReaction>
    <physiologicalReaction direction="right-to-left" evidence="17">
        <dbReference type="Rhea" id="RHEA:42142"/>
    </physiologicalReaction>
</comment>
<comment type="catalytic activity">
    <reaction evidence="10">
        <text>N-hexadecanoylsphinganine + a 1,2-diacyl-sn-glycero-3-phosphoethanolamine = N-hexadecanoyl-sphinganine-1-phosphoethanolamine + a 1,2-diacyl-sn-glycerol</text>
        <dbReference type="Rhea" id="RHEA:42128"/>
        <dbReference type="ChEBI" id="CHEBI:17815"/>
        <dbReference type="ChEBI" id="CHEBI:64612"/>
        <dbReference type="ChEBI" id="CHEBI:67042"/>
        <dbReference type="ChEBI" id="CHEBI:78654"/>
    </reaction>
    <physiologicalReaction direction="left-to-right" evidence="18">
        <dbReference type="Rhea" id="RHEA:42129"/>
    </physiologicalReaction>
</comment>
<comment type="catalytic activity">
    <reaction evidence="10">
        <text>N-hexadecanoyl-(4R)-hydroxysphinganine + a 1,2-diacyl-sn-glycero-3-phosphoethanolamine = N-hexadecanoyl-(4R)-hydroxysphinganine-1-phosphoethanolamine + a 1,2-diacyl-sn-glycerol</text>
        <dbReference type="Rhea" id="RHEA:42144"/>
        <dbReference type="ChEBI" id="CHEBI:17815"/>
        <dbReference type="ChEBI" id="CHEBI:64612"/>
        <dbReference type="ChEBI" id="CHEBI:65107"/>
        <dbReference type="ChEBI" id="CHEBI:78656"/>
    </reaction>
    <physiologicalReaction direction="left-to-right" evidence="18">
        <dbReference type="Rhea" id="RHEA:42145"/>
    </physiologicalReaction>
</comment>
<comment type="activity regulation">
    <text evidence="4">Inhibited by bacterial PC-phospholipase C inhibitor D609.</text>
</comment>
<comment type="pathway">
    <text evidence="6">Sphingolipid metabolism.</text>
</comment>
<comment type="interaction">
    <interactant intactId="EBI-10977284">
        <id>Q8NHU3</id>
    </interactant>
    <interactant intactId="EBI-11721746">
        <id>Q8TED1</id>
        <label>GPX8</label>
    </interactant>
    <organismsDiffer>false</organismsDiffer>
    <experiments>3</experiments>
</comment>
<comment type="interaction">
    <interactant intactId="EBI-10977284">
        <id>Q8NHU3</id>
    </interactant>
    <interactant intactId="EBI-12033434">
        <id>Q9UBY5</id>
        <label>LPAR3</label>
    </interactant>
    <organismsDiffer>false</organismsDiffer>
    <experiments>3</experiments>
</comment>
<comment type="interaction">
    <interactant intactId="EBI-10977284">
        <id>Q8NHU3</id>
    </interactant>
    <interactant intactId="EBI-14210385">
        <id>Q59EV6</id>
        <label>PPGB</label>
    </interactant>
    <organismsDiffer>false</organismsDiffer>
    <experiments>3</experiments>
</comment>
<comment type="interaction">
    <interactant intactId="EBI-10977284">
        <id>Q8NHU3</id>
    </interactant>
    <interactant intactId="EBI-12097582">
        <id>P23763-3</id>
        <label>VAMP1</label>
    </interactant>
    <organismsDiffer>false</organismsDiffer>
    <experiments>3</experiments>
</comment>
<comment type="interaction">
    <interactant intactId="EBI-10977284">
        <id>Q8NHU3</id>
    </interactant>
    <interactant intactId="EBI-718439">
        <id>O95159</id>
        <label>ZFPL1</label>
    </interactant>
    <organismsDiffer>false</organismsDiffer>
    <experiments>3</experiments>
</comment>
<comment type="subcellular location">
    <subcellularLocation>
        <location evidence="4 12">Cell membrane</location>
        <topology evidence="2">Multi-pass membrane protein</topology>
    </subcellularLocation>
    <subcellularLocation>
        <location evidence="4 7">Golgi apparatus membrane</location>
        <topology evidence="2">Multi-pass membrane protein</topology>
    </subcellularLocation>
    <text evidence="4">Primarily localized at the plasma membrane with a small fraction at the Golgi apparatus.</text>
</comment>
<comment type="tissue specificity">
    <text evidence="4">Brain, heart, kidney, liver, muscle and stomach. Also expressed in a number of cell lines such as carcinoma HeLa cells, hepatoma Hep-G2 cells, and colon carcinoma Caco-2 cells.</text>
</comment>
<comment type="PTM">
    <text evidence="9">Palmitoylated on Cys-331, Cys-332, Cys-343 and Cys-348; which plays an important role in plasma membrane localization.</text>
</comment>
<comment type="disease" evidence="12">
    <disease id="DI-05600">
        <name>Calvarial doughnut lesions with bone fragility</name>
        <acronym>CDL</acronym>
        <description>A rare autosomal dominant bone disease characterized by low bone density, distinctive X-ray translucencies of the skull, multiple fractures, elevated serum alkaline phosphatase, and dental caries. Patients present with childhood onset of primary osteoporosis and typical sclerotic doughnut-shaped lesions in the cranial bones.</description>
        <dbReference type="MIM" id="126550"/>
    </disease>
    <text>The disease may be caused by variants affecting the gene represented in this entry.</text>
</comment>
<comment type="disease" evidence="12">
    <disease id="DI-05601">
        <name>Calvarial doughnut lesions with bone fragility and spondylometaphyseal dysplasia</name>
        <acronym>CDLSMD</acronym>
        <description>A severe form of calvarial doughnut lesions with bone fragility, a rare autosomal dominant disease characterized by low bone density, distinctive X-ray translucencies of the skull, multiple fractures, elevated serum alkaline phosphatase, and dental caries. CDLSMD patients show neonatal onset of fractures, severe short stature, marked cranial sclerosis, and spondylometaphyseal dysplasia.</description>
        <dbReference type="MIM" id="126550"/>
    </disease>
    <text>The disease may be caused by variants affecting the gene represented in this entry.</text>
</comment>
<comment type="miscellaneous">
    <text>Overexpression of the human protein in mouse causes increased non-HDL-sphingomyelin and non-HDL cholesterol levels, decreased HDL-sphingomyelin and HDL-cholesterol levels and increases the atherogenic potential of non-HDL lipoprotein particles.</text>
</comment>
<comment type="similarity">
    <text evidence="16">Belongs to the sphingomyelin synthase family.</text>
</comment>
<proteinExistence type="evidence at protein level"/>
<organism evidence="20">
    <name type="scientific">Homo sapiens</name>
    <name type="common">Human</name>
    <dbReference type="NCBI Taxonomy" id="9606"/>
    <lineage>
        <taxon>Eukaryota</taxon>
        <taxon>Metazoa</taxon>
        <taxon>Chordata</taxon>
        <taxon>Craniata</taxon>
        <taxon>Vertebrata</taxon>
        <taxon>Euteleostomi</taxon>
        <taxon>Mammalia</taxon>
        <taxon>Eutheria</taxon>
        <taxon>Euarchontoglires</taxon>
        <taxon>Primates</taxon>
        <taxon>Haplorrhini</taxon>
        <taxon>Catarrhini</taxon>
        <taxon>Hominidae</taxon>
        <taxon>Homo</taxon>
    </lineage>
</organism>
<gene>
    <name evidence="15 22" type="primary">SGMS2</name>
    <name type="synonym">SMS2</name>
</gene>
<sequence>MDIIETAKLEEHLENQPSDPTNTYARPAEPVEEENKNGNGKPKSLSSGLRKGTKKYPDYIQIAMPTESRNKFPLEWWKTGIAFIYAVFNLVLTTVMITVVHERVPPKELSPPLPDKFFDYIDRVKWAFSVSEINGIILVGLWITQWLFLRYKSIVGRRFCFIIGTLYLYRCITMYVTTLPVPGMHFQCAPKLNGDSQAKVQRILRLISGGGLSITGSHILCGDFLFSGHTVTLTLTYLFIKEYSPRHFWWYHLICWLLSAAGIICILVAHEHYTIDVIIAYYITTRLFWWYHSMANEKNLKVSSQTNFLSRAWWFPIFYFFEKNVQGSIPCCFSWPLSWPPGCFKSSCKKYSRVQKIGEDNEKST</sequence>
<name>SMS2_HUMAN</name>
<keyword id="KW-1003">Cell membrane</keyword>
<keyword id="KW-0225">Disease variant</keyword>
<keyword id="KW-0333">Golgi apparatus</keyword>
<keyword id="KW-0418">Kinase</keyword>
<keyword id="KW-0443">Lipid metabolism</keyword>
<keyword id="KW-0449">Lipoprotein</keyword>
<keyword id="KW-0472">Membrane</keyword>
<keyword id="KW-1285">Osteoporosis</keyword>
<keyword id="KW-0564">Palmitate</keyword>
<keyword id="KW-1267">Proteomics identification</keyword>
<keyword id="KW-1185">Reference proteome</keyword>
<keyword id="KW-0746">Sphingolipid metabolism</keyword>
<keyword id="KW-0808">Transferase</keyword>
<keyword id="KW-0812">Transmembrane</keyword>
<keyword id="KW-1133">Transmembrane helix</keyword>
<dbReference type="EC" id="2.7.8.27" evidence="4 5 6 7 13"/>
<dbReference type="EMBL" id="AF452717">
    <property type="protein sequence ID" value="AAP13352.1"/>
    <property type="molecule type" value="mRNA"/>
</dbReference>
<dbReference type="EMBL" id="AK290344">
    <property type="protein sequence ID" value="BAF83033.1"/>
    <property type="molecule type" value="mRNA"/>
</dbReference>
<dbReference type="EMBL" id="AK314049">
    <property type="protein sequence ID" value="BAG36758.1"/>
    <property type="molecule type" value="mRNA"/>
</dbReference>
<dbReference type="EMBL" id="CH471057">
    <property type="protein sequence ID" value="EAX06211.1"/>
    <property type="molecule type" value="Genomic_DNA"/>
</dbReference>
<dbReference type="EMBL" id="BC028705">
    <property type="protein sequence ID" value="AAH28705.1"/>
    <property type="molecule type" value="mRNA"/>
</dbReference>
<dbReference type="EMBL" id="BC041369">
    <property type="protein sequence ID" value="AAH41369.1"/>
    <property type="molecule type" value="mRNA"/>
</dbReference>
<dbReference type="EMBL" id="AC096564">
    <property type="status" value="NOT_ANNOTATED_CDS"/>
    <property type="molecule type" value="Genomic_DNA"/>
</dbReference>
<dbReference type="CCDS" id="CCDS3677.1"/>
<dbReference type="RefSeq" id="NP_001129729.1">
    <property type="nucleotide sequence ID" value="NM_001136257.2"/>
</dbReference>
<dbReference type="RefSeq" id="NP_001129730.1">
    <property type="nucleotide sequence ID" value="NM_001136258.2"/>
</dbReference>
<dbReference type="RefSeq" id="NP_001362834.1">
    <property type="nucleotide sequence ID" value="NM_001375905.1"/>
</dbReference>
<dbReference type="RefSeq" id="NP_001362835.1">
    <property type="nucleotide sequence ID" value="NM_001375906.1"/>
</dbReference>
<dbReference type="RefSeq" id="NP_001362836.1">
    <property type="nucleotide sequence ID" value="NM_001375907.1"/>
</dbReference>
<dbReference type="RefSeq" id="NP_001362837.1">
    <property type="nucleotide sequence ID" value="NM_001375908.1"/>
</dbReference>
<dbReference type="RefSeq" id="NP_689834.1">
    <property type="nucleotide sequence ID" value="NM_152621.6"/>
</dbReference>
<dbReference type="RefSeq" id="XP_011530000.1">
    <property type="nucleotide sequence ID" value="XM_011531698.2"/>
</dbReference>
<dbReference type="RefSeq" id="XP_011530001.1">
    <property type="nucleotide sequence ID" value="XM_011531699.2"/>
</dbReference>
<dbReference type="RefSeq" id="XP_011530002.1">
    <property type="nucleotide sequence ID" value="XM_011531700.2"/>
</dbReference>
<dbReference type="RefSeq" id="XP_011530003.1">
    <property type="nucleotide sequence ID" value="XM_011531701.3"/>
</dbReference>
<dbReference type="RefSeq" id="XP_011530004.1">
    <property type="nucleotide sequence ID" value="XM_011531702.2"/>
</dbReference>
<dbReference type="RefSeq" id="XP_016863328.1">
    <property type="nucleotide sequence ID" value="XM_017007839.1"/>
</dbReference>
<dbReference type="RefSeq" id="XP_016863329.1">
    <property type="nucleotide sequence ID" value="XM_017007840.1"/>
</dbReference>
<dbReference type="RefSeq" id="XP_047305669.1">
    <property type="nucleotide sequence ID" value="XM_047449713.1"/>
</dbReference>
<dbReference type="RefSeq" id="XP_047305670.1">
    <property type="nucleotide sequence ID" value="XM_047449714.1"/>
</dbReference>
<dbReference type="RefSeq" id="XP_047305671.1">
    <property type="nucleotide sequence ID" value="XM_047449715.1"/>
</dbReference>
<dbReference type="RefSeq" id="XP_047305672.1">
    <property type="nucleotide sequence ID" value="XM_047449716.1"/>
</dbReference>
<dbReference type="RefSeq" id="XP_047305673.1">
    <property type="nucleotide sequence ID" value="XM_047449717.1"/>
</dbReference>
<dbReference type="RefSeq" id="XP_054205099.1">
    <property type="nucleotide sequence ID" value="XM_054349124.1"/>
</dbReference>
<dbReference type="RefSeq" id="XP_054205100.1">
    <property type="nucleotide sequence ID" value="XM_054349125.1"/>
</dbReference>
<dbReference type="RefSeq" id="XP_054205101.1">
    <property type="nucleotide sequence ID" value="XM_054349126.1"/>
</dbReference>
<dbReference type="RefSeq" id="XP_054205102.1">
    <property type="nucleotide sequence ID" value="XM_054349127.1"/>
</dbReference>
<dbReference type="RefSeq" id="XP_054205103.1">
    <property type="nucleotide sequence ID" value="XM_054349128.1"/>
</dbReference>
<dbReference type="RefSeq" id="XP_054205104.1">
    <property type="nucleotide sequence ID" value="XM_054349129.1"/>
</dbReference>
<dbReference type="RefSeq" id="XP_054205105.1">
    <property type="nucleotide sequence ID" value="XM_054349130.1"/>
</dbReference>
<dbReference type="SMR" id="Q8NHU3"/>
<dbReference type="BioGRID" id="127938">
    <property type="interactions" value="28"/>
</dbReference>
<dbReference type="FunCoup" id="Q8NHU3">
    <property type="interactions" value="864"/>
</dbReference>
<dbReference type="IntAct" id="Q8NHU3">
    <property type="interactions" value="13"/>
</dbReference>
<dbReference type="STRING" id="9606.ENSP00000378176"/>
<dbReference type="BindingDB" id="Q8NHU3"/>
<dbReference type="ChEMBL" id="CHEMBL3112379"/>
<dbReference type="DrugBank" id="DB18213">
    <property type="generic name" value="Idroxioleic acid"/>
</dbReference>
<dbReference type="GuidetoPHARMACOLOGY" id="2521"/>
<dbReference type="SwissLipids" id="SLP:000000172"/>
<dbReference type="iPTMnet" id="Q8NHU3"/>
<dbReference type="PhosphoSitePlus" id="Q8NHU3"/>
<dbReference type="SwissPalm" id="Q8NHU3"/>
<dbReference type="BioMuta" id="SGMS2"/>
<dbReference type="DMDM" id="44888519"/>
<dbReference type="jPOST" id="Q8NHU3"/>
<dbReference type="MassIVE" id="Q8NHU3"/>
<dbReference type="PaxDb" id="9606-ENSP00000378176"/>
<dbReference type="PeptideAtlas" id="Q8NHU3"/>
<dbReference type="ProteomicsDB" id="73758"/>
<dbReference type="Pumba" id="Q8NHU3"/>
<dbReference type="Antibodypedia" id="15282">
    <property type="antibodies" value="243 antibodies from 24 providers"/>
</dbReference>
<dbReference type="DNASU" id="166929"/>
<dbReference type="Ensembl" id="ENST00000359079.8">
    <property type="protein sequence ID" value="ENSP00000351981.4"/>
    <property type="gene ID" value="ENSG00000164023.15"/>
</dbReference>
<dbReference type="Ensembl" id="ENST00000394684.8">
    <property type="protein sequence ID" value="ENSP00000378176.4"/>
    <property type="gene ID" value="ENSG00000164023.15"/>
</dbReference>
<dbReference type="Ensembl" id="ENST00000394686.3">
    <property type="protein sequence ID" value="ENSP00000378178.3"/>
    <property type="gene ID" value="ENSG00000164023.15"/>
</dbReference>
<dbReference type="Ensembl" id="ENST00000690982.1">
    <property type="protein sequence ID" value="ENSP00000508566.1"/>
    <property type="gene ID" value="ENSG00000164023.15"/>
</dbReference>
<dbReference type="GeneID" id="166929"/>
<dbReference type="KEGG" id="hsa:166929"/>
<dbReference type="MANE-Select" id="ENST00000690982.1">
    <property type="protein sequence ID" value="ENSP00000508566.1"/>
    <property type="RefSeq nucleotide sequence ID" value="NM_001375905.1"/>
    <property type="RefSeq protein sequence ID" value="NP_001362834.1"/>
</dbReference>
<dbReference type="UCSC" id="uc003hyl.6">
    <property type="organism name" value="human"/>
</dbReference>
<dbReference type="AGR" id="HGNC:28395"/>
<dbReference type="CTD" id="166929"/>
<dbReference type="DisGeNET" id="166929"/>
<dbReference type="GeneCards" id="SGMS2"/>
<dbReference type="HGNC" id="HGNC:28395">
    <property type="gene designation" value="SGMS2"/>
</dbReference>
<dbReference type="HPA" id="ENSG00000164023">
    <property type="expression patterns" value="Low tissue specificity"/>
</dbReference>
<dbReference type="MalaCards" id="SGMS2"/>
<dbReference type="MIM" id="126550">
    <property type="type" value="phenotype"/>
</dbReference>
<dbReference type="MIM" id="611574">
    <property type="type" value="gene"/>
</dbReference>
<dbReference type="neXtProt" id="NX_Q8NHU3"/>
<dbReference type="OpenTargets" id="ENSG00000164023"/>
<dbReference type="PharmGKB" id="PA162403069"/>
<dbReference type="VEuPathDB" id="HostDB:ENSG00000164023"/>
<dbReference type="eggNOG" id="KOG3058">
    <property type="taxonomic scope" value="Eukaryota"/>
</dbReference>
<dbReference type="GeneTree" id="ENSGT00940000157370"/>
<dbReference type="HOGENOM" id="CLU_027104_0_1_1"/>
<dbReference type="InParanoid" id="Q8NHU3"/>
<dbReference type="OMA" id="SKFPLEW"/>
<dbReference type="OrthoDB" id="422827at2759"/>
<dbReference type="PAN-GO" id="Q8NHU3">
    <property type="GO annotations" value="7 GO annotations based on evolutionary models"/>
</dbReference>
<dbReference type="PhylomeDB" id="Q8NHU3"/>
<dbReference type="TreeFam" id="TF314547"/>
<dbReference type="BRENDA" id="2.7.8.27">
    <property type="organism ID" value="2681"/>
</dbReference>
<dbReference type="PathwayCommons" id="Q8NHU3"/>
<dbReference type="Reactome" id="R-HSA-1660661">
    <property type="pathway name" value="Sphingolipid de novo biosynthesis"/>
</dbReference>
<dbReference type="SignaLink" id="Q8NHU3"/>
<dbReference type="BioGRID-ORCS" id="166929">
    <property type="hits" value="9 hits in 1150 CRISPR screens"/>
</dbReference>
<dbReference type="ChiTaRS" id="SGMS2">
    <property type="organism name" value="human"/>
</dbReference>
<dbReference type="GenomeRNAi" id="166929"/>
<dbReference type="Pharos" id="Q8NHU3">
    <property type="development level" value="Tchem"/>
</dbReference>
<dbReference type="PRO" id="PR:Q8NHU3"/>
<dbReference type="Proteomes" id="UP000005640">
    <property type="component" value="Chromosome 4"/>
</dbReference>
<dbReference type="RNAct" id="Q8NHU3">
    <property type="molecule type" value="protein"/>
</dbReference>
<dbReference type="Bgee" id="ENSG00000164023">
    <property type="expression patterns" value="Expressed in tibia and 170 other cell types or tissues"/>
</dbReference>
<dbReference type="ExpressionAtlas" id="Q8NHU3">
    <property type="expression patterns" value="baseline and differential"/>
</dbReference>
<dbReference type="GO" id="GO:0005789">
    <property type="term" value="C:endoplasmic reticulum membrane"/>
    <property type="evidence" value="ECO:0000318"/>
    <property type="project" value="GO_Central"/>
</dbReference>
<dbReference type="GO" id="GO:0005794">
    <property type="term" value="C:Golgi apparatus"/>
    <property type="evidence" value="ECO:0000314"/>
    <property type="project" value="MGI"/>
</dbReference>
<dbReference type="GO" id="GO:0000139">
    <property type="term" value="C:Golgi membrane"/>
    <property type="evidence" value="ECO:0000314"/>
    <property type="project" value="UniProtKB"/>
</dbReference>
<dbReference type="GO" id="GO:0005654">
    <property type="term" value="C:nucleoplasm"/>
    <property type="evidence" value="ECO:0000314"/>
    <property type="project" value="HPA"/>
</dbReference>
<dbReference type="GO" id="GO:0005886">
    <property type="term" value="C:plasma membrane"/>
    <property type="evidence" value="ECO:0000314"/>
    <property type="project" value="UniProtKB"/>
</dbReference>
<dbReference type="GO" id="GO:0047493">
    <property type="term" value="F:ceramide cholinephosphotransferase activity"/>
    <property type="evidence" value="ECO:0000314"/>
    <property type="project" value="UniProtKB"/>
</dbReference>
<dbReference type="GO" id="GO:0002950">
    <property type="term" value="F:ceramide phosphoethanolamine synthase activity"/>
    <property type="evidence" value="ECO:0007669"/>
    <property type="project" value="Ensembl"/>
</dbReference>
<dbReference type="GO" id="GO:0016301">
    <property type="term" value="F:kinase activity"/>
    <property type="evidence" value="ECO:0007669"/>
    <property type="project" value="UniProtKB-KW"/>
</dbReference>
<dbReference type="GO" id="GO:0033188">
    <property type="term" value="F:sphingomyelin synthase activity"/>
    <property type="evidence" value="ECO:0000314"/>
    <property type="project" value="UniProtKB"/>
</dbReference>
<dbReference type="GO" id="GO:0046513">
    <property type="term" value="P:ceramide biosynthetic process"/>
    <property type="evidence" value="ECO:0000318"/>
    <property type="project" value="GO_Central"/>
</dbReference>
<dbReference type="GO" id="GO:1905373">
    <property type="term" value="P:ceramide phosphoethanolamine biosynthetic process"/>
    <property type="evidence" value="ECO:0007669"/>
    <property type="project" value="Ensembl"/>
</dbReference>
<dbReference type="GO" id="GO:0030500">
    <property type="term" value="P:regulation of bone mineralization"/>
    <property type="evidence" value="ECO:0000315"/>
    <property type="project" value="UniProtKB"/>
</dbReference>
<dbReference type="GO" id="GO:0030148">
    <property type="term" value="P:sphingolipid biosynthetic process"/>
    <property type="evidence" value="ECO:0000304"/>
    <property type="project" value="Reactome"/>
</dbReference>
<dbReference type="GO" id="GO:0006686">
    <property type="term" value="P:sphingomyelin biosynthetic process"/>
    <property type="evidence" value="ECO:0000314"/>
    <property type="project" value="UniProtKB"/>
</dbReference>
<dbReference type="CDD" id="cd01610">
    <property type="entry name" value="PAP2_like"/>
    <property type="match status" value="1"/>
</dbReference>
<dbReference type="InterPro" id="IPR045221">
    <property type="entry name" value="Sphingomyelin_synth-like"/>
</dbReference>
<dbReference type="InterPro" id="IPR025749">
    <property type="entry name" value="Sphingomyelin_synth-like_dom"/>
</dbReference>
<dbReference type="PANTHER" id="PTHR21290:SF24">
    <property type="entry name" value="PHOSPHATIDYLCHOLINE:CERAMIDE CHOLINEPHOSPHOTRANSFERASE 2"/>
    <property type="match status" value="1"/>
</dbReference>
<dbReference type="PANTHER" id="PTHR21290">
    <property type="entry name" value="SPHINGOMYELIN SYNTHETASE"/>
    <property type="match status" value="1"/>
</dbReference>
<dbReference type="Pfam" id="PF14360">
    <property type="entry name" value="PAP2_C"/>
    <property type="match status" value="1"/>
</dbReference>
<evidence type="ECO:0000250" key="1">
    <source>
        <dbReference type="UniProtKB" id="Q9D4B1"/>
    </source>
</evidence>
<evidence type="ECO:0000255" key="2"/>
<evidence type="ECO:0000256" key="3">
    <source>
        <dbReference type="SAM" id="MobiDB-lite"/>
    </source>
</evidence>
<evidence type="ECO:0000269" key="4">
    <source>
    </source>
</evidence>
<evidence type="ECO:0000269" key="5">
    <source>
    </source>
</evidence>
<evidence type="ECO:0000269" key="6">
    <source>
    </source>
</evidence>
<evidence type="ECO:0000269" key="7">
    <source>
    </source>
</evidence>
<evidence type="ECO:0000269" key="8">
    <source>
    </source>
</evidence>
<evidence type="ECO:0000269" key="9">
    <source>
    </source>
</evidence>
<evidence type="ECO:0000269" key="10">
    <source>
    </source>
</evidence>
<evidence type="ECO:0000269" key="11">
    <source>
    </source>
</evidence>
<evidence type="ECO:0000269" key="12">
    <source>
    </source>
</evidence>
<evidence type="ECO:0000269" key="13">
    <source>
    </source>
</evidence>
<evidence type="ECO:0000303" key="14">
    <source>
    </source>
</evidence>
<evidence type="ECO:0000303" key="15">
    <source>
    </source>
</evidence>
<evidence type="ECO:0000305" key="16"/>
<evidence type="ECO:0000305" key="17">
    <source>
    </source>
</evidence>
<evidence type="ECO:0000305" key="18">
    <source>
    </source>
</evidence>
<evidence type="ECO:0000305" key="19">
    <source>
    </source>
</evidence>
<evidence type="ECO:0000312" key="20">
    <source>
        <dbReference type="EMBL" id="AAH28705.1"/>
    </source>
</evidence>
<evidence type="ECO:0000312" key="21">
    <source>
        <dbReference type="EMBL" id="AAP13352.1"/>
    </source>
</evidence>
<evidence type="ECO:0000312" key="22">
    <source>
        <dbReference type="HGNC" id="HGNC:28395"/>
    </source>
</evidence>
<accession>Q8NHU3</accession>
<accession>A8K2S9</accession>
<accession>B2RA61</accession>
<protein>
    <recommendedName>
        <fullName>Phosphatidylcholine:ceramide cholinephosphotransferase 2</fullName>
        <ecNumber evidence="4 5 6 7 13">2.7.8.27</ecNumber>
    </recommendedName>
    <alternativeName>
        <fullName evidence="14">Sphingomyelin synthase 2</fullName>
        <shortName>SMS2</shortName>
    </alternativeName>
</protein>